<dbReference type="EC" id="2.5.1.72" evidence="1"/>
<dbReference type="EMBL" id="CP000680">
    <property type="protein sequence ID" value="ABP84047.1"/>
    <property type="molecule type" value="Genomic_DNA"/>
</dbReference>
<dbReference type="SMR" id="A4XRT1"/>
<dbReference type="STRING" id="399739.Pmen_1282"/>
<dbReference type="KEGG" id="pmy:Pmen_1282"/>
<dbReference type="PATRIC" id="fig|399739.8.peg.1297"/>
<dbReference type="eggNOG" id="COG0379">
    <property type="taxonomic scope" value="Bacteria"/>
</dbReference>
<dbReference type="HOGENOM" id="CLU_047382_1_0_6"/>
<dbReference type="UniPathway" id="UPA00253">
    <property type="reaction ID" value="UER00327"/>
</dbReference>
<dbReference type="GO" id="GO:0005829">
    <property type="term" value="C:cytosol"/>
    <property type="evidence" value="ECO:0007669"/>
    <property type="project" value="TreeGrafter"/>
</dbReference>
<dbReference type="GO" id="GO:0051539">
    <property type="term" value="F:4 iron, 4 sulfur cluster binding"/>
    <property type="evidence" value="ECO:0007669"/>
    <property type="project" value="UniProtKB-KW"/>
</dbReference>
<dbReference type="GO" id="GO:0046872">
    <property type="term" value="F:metal ion binding"/>
    <property type="evidence" value="ECO:0007669"/>
    <property type="project" value="UniProtKB-KW"/>
</dbReference>
<dbReference type="GO" id="GO:0008987">
    <property type="term" value="F:quinolinate synthetase A activity"/>
    <property type="evidence" value="ECO:0007669"/>
    <property type="project" value="UniProtKB-UniRule"/>
</dbReference>
<dbReference type="GO" id="GO:0034628">
    <property type="term" value="P:'de novo' NAD biosynthetic process from L-aspartate"/>
    <property type="evidence" value="ECO:0007669"/>
    <property type="project" value="TreeGrafter"/>
</dbReference>
<dbReference type="FunFam" id="3.40.50.10800:FF:000001">
    <property type="entry name" value="Quinolinate synthase A"/>
    <property type="match status" value="1"/>
</dbReference>
<dbReference type="FunFam" id="3.40.50.10800:FF:000003">
    <property type="entry name" value="Quinolinate synthase A"/>
    <property type="match status" value="1"/>
</dbReference>
<dbReference type="Gene3D" id="3.40.50.10800">
    <property type="entry name" value="NadA-like"/>
    <property type="match status" value="3"/>
</dbReference>
<dbReference type="HAMAP" id="MF_00567">
    <property type="entry name" value="NadA_type1"/>
    <property type="match status" value="1"/>
</dbReference>
<dbReference type="InterPro" id="IPR003473">
    <property type="entry name" value="NadA"/>
</dbReference>
<dbReference type="InterPro" id="IPR036094">
    <property type="entry name" value="NadA_sf"/>
</dbReference>
<dbReference type="InterPro" id="IPR023513">
    <property type="entry name" value="Quinolinate_synth_A_type1"/>
</dbReference>
<dbReference type="NCBIfam" id="TIGR00550">
    <property type="entry name" value="nadA"/>
    <property type="match status" value="1"/>
</dbReference>
<dbReference type="NCBIfam" id="NF006877">
    <property type="entry name" value="PRK09375.1-1"/>
    <property type="match status" value="1"/>
</dbReference>
<dbReference type="NCBIfam" id="NF006878">
    <property type="entry name" value="PRK09375.1-2"/>
    <property type="match status" value="1"/>
</dbReference>
<dbReference type="PANTHER" id="PTHR30573:SF0">
    <property type="entry name" value="QUINOLINATE SYNTHASE, CHLOROPLASTIC"/>
    <property type="match status" value="1"/>
</dbReference>
<dbReference type="PANTHER" id="PTHR30573">
    <property type="entry name" value="QUINOLINATE SYNTHETASE A"/>
    <property type="match status" value="1"/>
</dbReference>
<dbReference type="Pfam" id="PF02445">
    <property type="entry name" value="NadA"/>
    <property type="match status" value="1"/>
</dbReference>
<dbReference type="SUPFAM" id="SSF142754">
    <property type="entry name" value="NadA-like"/>
    <property type="match status" value="1"/>
</dbReference>
<name>NADA_ECTM1</name>
<evidence type="ECO:0000255" key="1">
    <source>
        <dbReference type="HAMAP-Rule" id="MF_00567"/>
    </source>
</evidence>
<reference key="1">
    <citation type="submission" date="2007-04" db="EMBL/GenBank/DDBJ databases">
        <title>Complete sequence of Pseudomonas mendocina ymp.</title>
        <authorList>
            <consortium name="US DOE Joint Genome Institute"/>
            <person name="Copeland A."/>
            <person name="Lucas S."/>
            <person name="Lapidus A."/>
            <person name="Barry K."/>
            <person name="Glavina del Rio T."/>
            <person name="Dalin E."/>
            <person name="Tice H."/>
            <person name="Pitluck S."/>
            <person name="Kiss H."/>
            <person name="Brettin T."/>
            <person name="Detter J.C."/>
            <person name="Bruce D."/>
            <person name="Han C."/>
            <person name="Schmutz J."/>
            <person name="Larimer F."/>
            <person name="Land M."/>
            <person name="Hauser L."/>
            <person name="Kyrpides N."/>
            <person name="Mikhailova N."/>
            <person name="Hersman L."/>
            <person name="Dubois J."/>
            <person name="Maurice P."/>
            <person name="Richardson P."/>
        </authorList>
    </citation>
    <scope>NUCLEOTIDE SEQUENCE [LARGE SCALE GENOMIC DNA]</scope>
    <source>
        <strain>ymp</strain>
    </source>
</reference>
<comment type="function">
    <text evidence="1">Catalyzes the condensation of iminoaspartate with dihydroxyacetone phosphate to form quinolinate.</text>
</comment>
<comment type="catalytic activity">
    <reaction evidence="1">
        <text>iminosuccinate + dihydroxyacetone phosphate = quinolinate + phosphate + 2 H2O + H(+)</text>
        <dbReference type="Rhea" id="RHEA:25888"/>
        <dbReference type="ChEBI" id="CHEBI:15377"/>
        <dbReference type="ChEBI" id="CHEBI:15378"/>
        <dbReference type="ChEBI" id="CHEBI:29959"/>
        <dbReference type="ChEBI" id="CHEBI:43474"/>
        <dbReference type="ChEBI" id="CHEBI:57642"/>
        <dbReference type="ChEBI" id="CHEBI:77875"/>
        <dbReference type="EC" id="2.5.1.72"/>
    </reaction>
    <physiologicalReaction direction="left-to-right" evidence="1">
        <dbReference type="Rhea" id="RHEA:25889"/>
    </physiologicalReaction>
</comment>
<comment type="cofactor">
    <cofactor evidence="1">
        <name>[4Fe-4S] cluster</name>
        <dbReference type="ChEBI" id="CHEBI:49883"/>
    </cofactor>
    <text evidence="1">Binds 1 [4Fe-4S] cluster per subunit.</text>
</comment>
<comment type="pathway">
    <text evidence="1">Cofactor biosynthesis; NAD(+) biosynthesis; quinolinate from iminoaspartate: step 1/1.</text>
</comment>
<comment type="subcellular location">
    <subcellularLocation>
        <location evidence="1">Cytoplasm</location>
    </subcellularLocation>
</comment>
<comment type="similarity">
    <text evidence="1">Belongs to the quinolinate synthase family. Type 1 subfamily.</text>
</comment>
<gene>
    <name evidence="1" type="primary">nadA</name>
    <name type="ordered locus">Pmen_1282</name>
</gene>
<organism>
    <name type="scientific">Ectopseudomonas mendocina (strain ymp)</name>
    <name type="common">Pseudomonas mendocina</name>
    <dbReference type="NCBI Taxonomy" id="399739"/>
    <lineage>
        <taxon>Bacteria</taxon>
        <taxon>Pseudomonadati</taxon>
        <taxon>Pseudomonadota</taxon>
        <taxon>Gammaproteobacteria</taxon>
        <taxon>Pseudomonadales</taxon>
        <taxon>Pseudomonadaceae</taxon>
        <taxon>Ectopseudomonas</taxon>
    </lineage>
</organism>
<accession>A4XRT1</accession>
<feature type="chain" id="PRO_1000024964" description="Quinolinate synthase">
    <location>
        <begin position="1"/>
        <end position="352"/>
    </location>
</feature>
<feature type="binding site" evidence="1">
    <location>
        <position position="48"/>
    </location>
    <ligand>
        <name>iminosuccinate</name>
        <dbReference type="ChEBI" id="CHEBI:77875"/>
    </ligand>
</feature>
<feature type="binding site" evidence="1">
    <location>
        <position position="69"/>
    </location>
    <ligand>
        <name>iminosuccinate</name>
        <dbReference type="ChEBI" id="CHEBI:77875"/>
    </ligand>
</feature>
<feature type="binding site" evidence="1">
    <location>
        <position position="114"/>
    </location>
    <ligand>
        <name>[4Fe-4S] cluster</name>
        <dbReference type="ChEBI" id="CHEBI:49883"/>
    </ligand>
</feature>
<feature type="binding site" evidence="1">
    <location>
        <begin position="140"/>
        <end position="142"/>
    </location>
    <ligand>
        <name>iminosuccinate</name>
        <dbReference type="ChEBI" id="CHEBI:77875"/>
    </ligand>
</feature>
<feature type="binding site" evidence="1">
    <location>
        <position position="157"/>
    </location>
    <ligand>
        <name>iminosuccinate</name>
        <dbReference type="ChEBI" id="CHEBI:77875"/>
    </ligand>
</feature>
<feature type="binding site" evidence="1">
    <location>
        <position position="201"/>
    </location>
    <ligand>
        <name>[4Fe-4S] cluster</name>
        <dbReference type="ChEBI" id="CHEBI:49883"/>
    </ligand>
</feature>
<feature type="binding site" evidence="1">
    <location>
        <begin position="227"/>
        <end position="229"/>
    </location>
    <ligand>
        <name>iminosuccinate</name>
        <dbReference type="ChEBI" id="CHEBI:77875"/>
    </ligand>
</feature>
<feature type="binding site" evidence="1">
    <location>
        <position position="244"/>
    </location>
    <ligand>
        <name>iminosuccinate</name>
        <dbReference type="ChEBI" id="CHEBI:77875"/>
    </ligand>
</feature>
<feature type="binding site" evidence="1">
    <location>
        <position position="298"/>
    </location>
    <ligand>
        <name>[4Fe-4S] cluster</name>
        <dbReference type="ChEBI" id="CHEBI:49883"/>
    </ligand>
</feature>
<sequence length="352" mass="38456">MTQISERLLVQAHLDAKQPKPLTAEEEAFYRREIAAELKKQNAVLVAHYYCDPVIQALAEETGGCVSDSLEMARFGNQHPAQTVVVAGVKFMGETAKILNPEKRVLMPTLEATCSLDLGCPVDEFSAFCDQHPERTVVVYANTSAAVKARADWVVTSSCALEIVESLMDNGETIIWAPDKHLGNYIQRETGADMLLWDGACIVHEEFKSKQLLDMKALYPDAAILVHPESPQSVVELADAVGSTSQLIKAAQTLPNSTFIVATDRGIFYKMQQLCPDKTFIEAPTAGNGAACRSCAHCPWMAMNTLERVLTGLRQGSGEIHVDPALIPKAIKPLKRMLDFTQAARMKVAGNA</sequence>
<protein>
    <recommendedName>
        <fullName evidence="1">Quinolinate synthase</fullName>
        <ecNumber evidence="1">2.5.1.72</ecNumber>
    </recommendedName>
</protein>
<proteinExistence type="inferred from homology"/>
<keyword id="KW-0004">4Fe-4S</keyword>
<keyword id="KW-0963">Cytoplasm</keyword>
<keyword id="KW-0408">Iron</keyword>
<keyword id="KW-0411">Iron-sulfur</keyword>
<keyword id="KW-0479">Metal-binding</keyword>
<keyword id="KW-0662">Pyridine nucleotide biosynthesis</keyword>
<keyword id="KW-0808">Transferase</keyword>